<sequence>MAGRGCGCSPGHLNEDNARFLLLAGLILLYLLGGAAVFSALELAQELQAKQRWEERLANFSRGHNLSREELRGFLRHYEEATRAGIRMDSVRPRWDFTGAFYFVGTVVSTIGFGMTTPATTGGKIFLIFYGLIGCASTILFFNLFLERLITVIACVMRSCHQQQLRRRGAVTQDNMKAPEKGEADSLTGWKPSVYYVMLILCLASVAISCGASALYTTMEGWSYFDSVYFCFVAFSTIGFGDLVSSQNAQYESQGLYRFFNFFLILMGVCCIYSLFNVISILIKQTVNWILRKLDSGCFPPCQRGLLRSRRNVVMPGNIRNRCNISIETDGVMESDTDGRRLSGEMISMKDTNKVSLAILQKQLSEMANGGPHQNSASSRDDEFSGGVGAFAVMNNRLAETSGDR</sequence>
<organism>
    <name type="scientific">Mus musculus</name>
    <name type="common">Mouse</name>
    <dbReference type="NCBI Taxonomy" id="10090"/>
    <lineage>
        <taxon>Eukaryota</taxon>
        <taxon>Metazoa</taxon>
        <taxon>Chordata</taxon>
        <taxon>Craniata</taxon>
        <taxon>Vertebrata</taxon>
        <taxon>Euteleostomi</taxon>
        <taxon>Mammalia</taxon>
        <taxon>Eutheria</taxon>
        <taxon>Euarchontoglires</taxon>
        <taxon>Glires</taxon>
        <taxon>Rodentia</taxon>
        <taxon>Myomorpha</taxon>
        <taxon>Muroidea</taxon>
        <taxon>Muridae</taxon>
        <taxon>Murinae</taxon>
        <taxon>Mus</taxon>
        <taxon>Mus</taxon>
    </lineage>
</organism>
<name>KCNKD_MOUSE</name>
<accession>Q8R1P5</accession>
<keyword id="KW-1003">Cell membrane</keyword>
<keyword id="KW-0325">Glycoprotein</keyword>
<keyword id="KW-0407">Ion channel</keyword>
<keyword id="KW-0406">Ion transport</keyword>
<keyword id="KW-0472">Membrane</keyword>
<keyword id="KW-0479">Metal-binding</keyword>
<keyword id="KW-0630">Potassium</keyword>
<keyword id="KW-0631">Potassium channel</keyword>
<keyword id="KW-0633">Potassium transport</keyword>
<keyword id="KW-1185">Reference proteome</keyword>
<keyword id="KW-0812">Transmembrane</keyword>
<keyword id="KW-1133">Transmembrane helix</keyword>
<keyword id="KW-0813">Transport</keyword>
<keyword id="KW-0851">Voltage-gated channel</keyword>
<evidence type="ECO:0000250" key="1">
    <source>
        <dbReference type="UniProtKB" id="P57789"/>
    </source>
</evidence>
<evidence type="ECO:0000250" key="2">
    <source>
        <dbReference type="UniProtKB" id="Q9HB14"/>
    </source>
</evidence>
<evidence type="ECO:0000255" key="3"/>
<evidence type="ECO:0000269" key="4">
    <source>
    </source>
</evidence>
<evidence type="ECO:0000269" key="5">
    <source>
    </source>
</evidence>
<evidence type="ECO:0000269" key="6">
    <source>
    </source>
</evidence>
<evidence type="ECO:0000269" key="7">
    <source>
    </source>
</evidence>
<evidence type="ECO:0000303" key="8">
    <source>
    </source>
</evidence>
<evidence type="ECO:0000305" key="9"/>
<evidence type="ECO:0000312" key="10">
    <source>
        <dbReference type="MGI" id="MGI:2384976"/>
    </source>
</evidence>
<gene>
    <name evidence="8 10" type="primary">Kcnk13</name>
    <name type="synonym">Gm1570</name>
</gene>
<proteinExistence type="evidence at transcript level"/>
<protein>
    <recommendedName>
        <fullName evidence="8">Potassium channel subfamily K member 13</fullName>
    </recommendedName>
    <alternativeName>
        <fullName>Tandem pore domain halothane-inhibited potassium channel 1</fullName>
        <shortName evidence="8">THIK-1</shortName>
    </alternativeName>
</protein>
<comment type="function">
    <text evidence="2 4 5 6 7">K(+) channel that conducts outward rectifying tonic currents potentiated by purinergic signals (PubMed:38409076). Homo- and heterodimerizes to form functional channels with distinct regulatory and gating properties (By similarity). Contributes most of K(+) currents at the plasma membrane of resting microglia. Maintains a depolarized membrane potential required for proper ramified microglia morphology and phagocytosis, selectively mediating microglial pruning of presynaptic compartments at hippocampal excitatory synapses (PubMed:29290552, PubMed:34642249). Upon local release of ATP caused by neuronal injury or infection, it is potentiated by P2RY12 and P2RX7 receptor signaling and contributes to ATP-triggered K(+) efflux underlying microglial NLRP3 inflammasome assembly and IL1B release (PubMed:29290552, PubMed:35353387, PubMed:38409076).</text>
</comment>
<comment type="catalytic activity">
    <reaction evidence="2">
        <text>K(+)(in) = K(+)(out)</text>
        <dbReference type="Rhea" id="RHEA:29463"/>
        <dbReference type="ChEBI" id="CHEBI:29103"/>
    </reaction>
</comment>
<comment type="subunit">
    <text evidence="2">Homodimer. Heterodimer with KCNK12.</text>
</comment>
<comment type="subcellular location">
    <subcellularLocation>
        <location evidence="2">Cell membrane</location>
        <topology evidence="3">Multi-pass membrane protein</topology>
    </subcellularLocation>
</comment>
<comment type="domain">
    <text evidence="1">Each subunit contributes two pore-forming domains 1 and 2 which assemble to form a single pore with M2 and M4 transmembrane helices lining the central cavity and M1 and M3 facing the lipid bilayer. The transmembrane helices are bridged by the selectivity filters 1 and 2 that coordinate the permeant ions. Up to four ions can simultaneously occupy the selectivity filter and at least two elementary charges must translocate across the filter to convert it into the open conformation.</text>
</comment>
<comment type="similarity">
    <text evidence="9">Belongs to the two pore domain potassium channel (TC 1.A.1.8) family.</text>
</comment>
<dbReference type="EMBL" id="BC023443">
    <property type="protein sequence ID" value="AAH23443.1"/>
    <property type="molecule type" value="mRNA"/>
</dbReference>
<dbReference type="CCDS" id="CCDS26106.1"/>
<dbReference type="RefSeq" id="NP_001157898.1">
    <property type="nucleotide sequence ID" value="NM_001164426.1"/>
</dbReference>
<dbReference type="RefSeq" id="NP_001157899.1">
    <property type="nucleotide sequence ID" value="NM_001164427.1"/>
</dbReference>
<dbReference type="RefSeq" id="NP_666149.1">
    <property type="nucleotide sequence ID" value="NM_146037.2"/>
</dbReference>
<dbReference type="RefSeq" id="XP_030102525.1">
    <property type="nucleotide sequence ID" value="XM_030246665.2"/>
</dbReference>
<dbReference type="RefSeq" id="XP_036013234.1">
    <property type="nucleotide sequence ID" value="XM_036157341.1"/>
</dbReference>
<dbReference type="SMR" id="Q8R1P5"/>
<dbReference type="STRING" id="10090.ENSMUSP00000051846"/>
<dbReference type="GuidetoPHARMACOLOGY" id="523"/>
<dbReference type="GlyCosmos" id="Q8R1P5">
    <property type="glycosylation" value="2 sites, No reported glycans"/>
</dbReference>
<dbReference type="GlyGen" id="Q8R1P5">
    <property type="glycosylation" value="2 sites"/>
</dbReference>
<dbReference type="iPTMnet" id="Q8R1P5"/>
<dbReference type="PhosphoSitePlus" id="Q8R1P5"/>
<dbReference type="PaxDb" id="10090-ENSMUSP00000051846"/>
<dbReference type="ProteomicsDB" id="269273"/>
<dbReference type="Antibodypedia" id="13480">
    <property type="antibodies" value="122 antibodies from 27 providers"/>
</dbReference>
<dbReference type="DNASU" id="217826"/>
<dbReference type="Ensembl" id="ENSMUST00000049788.9">
    <property type="protein sequence ID" value="ENSMUSP00000051846.9"/>
    <property type="gene ID" value="ENSMUSG00000045404.17"/>
</dbReference>
<dbReference type="Ensembl" id="ENSMUST00000160413.8">
    <property type="protein sequence ID" value="ENSMUSP00000123916.2"/>
    <property type="gene ID" value="ENSMUSG00000045404.17"/>
</dbReference>
<dbReference type="Ensembl" id="ENSMUST00000177549.8">
    <property type="protein sequence ID" value="ENSMUSP00000136882.2"/>
    <property type="gene ID" value="ENSMUSG00000045404.17"/>
</dbReference>
<dbReference type="GeneID" id="217826"/>
<dbReference type="KEGG" id="mmu:217826"/>
<dbReference type="UCSC" id="uc007osi.2">
    <property type="organism name" value="mouse"/>
</dbReference>
<dbReference type="AGR" id="MGI:2384976"/>
<dbReference type="CTD" id="56659"/>
<dbReference type="MGI" id="MGI:2384976">
    <property type="gene designation" value="Kcnk13"/>
</dbReference>
<dbReference type="VEuPathDB" id="HostDB:ENSMUSG00000045404"/>
<dbReference type="eggNOG" id="KOG4404">
    <property type="taxonomic scope" value="Eukaryota"/>
</dbReference>
<dbReference type="GeneTree" id="ENSGT00940000157960"/>
<dbReference type="HOGENOM" id="CLU_022504_3_1_1"/>
<dbReference type="InParanoid" id="Q8R1P5"/>
<dbReference type="OMA" id="NFTRRHN"/>
<dbReference type="OrthoDB" id="297496at2759"/>
<dbReference type="PhylomeDB" id="Q8R1P5"/>
<dbReference type="TreeFam" id="TF313947"/>
<dbReference type="Reactome" id="R-MMU-1299287">
    <property type="pathway name" value="Tandem pore domain halothane-inhibited K+ channel (THIK)"/>
</dbReference>
<dbReference type="Reactome" id="R-MMU-5576886">
    <property type="pathway name" value="Phase 4 - resting membrane potential"/>
</dbReference>
<dbReference type="BioGRID-ORCS" id="217826">
    <property type="hits" value="2 hits in 77 CRISPR screens"/>
</dbReference>
<dbReference type="PRO" id="PR:Q8R1P5"/>
<dbReference type="Proteomes" id="UP000000589">
    <property type="component" value="Chromosome 12"/>
</dbReference>
<dbReference type="RNAct" id="Q8R1P5">
    <property type="molecule type" value="protein"/>
</dbReference>
<dbReference type="Bgee" id="ENSMUSG00000045404">
    <property type="expression patterns" value="Expressed in secondary oocyte and 77 other cell types or tissues"/>
</dbReference>
<dbReference type="ExpressionAtlas" id="Q8R1P5">
    <property type="expression patterns" value="baseline and differential"/>
</dbReference>
<dbReference type="GO" id="GO:0034702">
    <property type="term" value="C:monoatomic ion channel complex"/>
    <property type="evidence" value="ECO:0007669"/>
    <property type="project" value="UniProtKB-KW"/>
</dbReference>
<dbReference type="GO" id="GO:0005886">
    <property type="term" value="C:plasma membrane"/>
    <property type="evidence" value="ECO:0000250"/>
    <property type="project" value="UniProtKB"/>
</dbReference>
<dbReference type="GO" id="GO:0042802">
    <property type="term" value="F:identical protein binding"/>
    <property type="evidence" value="ECO:0000250"/>
    <property type="project" value="UniProtKB"/>
</dbReference>
<dbReference type="GO" id="GO:0046872">
    <property type="term" value="F:metal ion binding"/>
    <property type="evidence" value="ECO:0007669"/>
    <property type="project" value="UniProtKB-KW"/>
</dbReference>
<dbReference type="GO" id="GO:0005267">
    <property type="term" value="F:potassium channel activity"/>
    <property type="evidence" value="ECO:0007669"/>
    <property type="project" value="UniProtKB-KW"/>
</dbReference>
<dbReference type="GO" id="GO:0046982">
    <property type="term" value="F:protein heterodimerization activity"/>
    <property type="evidence" value="ECO:0000250"/>
    <property type="project" value="UniProtKB"/>
</dbReference>
<dbReference type="GO" id="GO:1905810">
    <property type="term" value="P:regulation of excitatory synapse pruning"/>
    <property type="evidence" value="ECO:0000315"/>
    <property type="project" value="UniProtKB"/>
</dbReference>
<dbReference type="GO" id="GO:1900225">
    <property type="term" value="P:regulation of NLRP3 inflammasome complex assembly"/>
    <property type="evidence" value="ECO:0000315"/>
    <property type="project" value="UniProtKB"/>
</dbReference>
<dbReference type="GO" id="GO:0060075">
    <property type="term" value="P:regulation of resting membrane potential"/>
    <property type="evidence" value="ECO:0000315"/>
    <property type="project" value="UniProtKB"/>
</dbReference>
<dbReference type="FunFam" id="1.10.287.70:FF:000070">
    <property type="entry name" value="Potassium channel, subfamily K, member 12 like"/>
    <property type="match status" value="1"/>
</dbReference>
<dbReference type="Gene3D" id="1.10.287.70">
    <property type="match status" value="1"/>
</dbReference>
<dbReference type="InterPro" id="IPR003280">
    <property type="entry name" value="2pore_dom_K_chnl"/>
</dbReference>
<dbReference type="InterPro" id="IPR005410">
    <property type="entry name" value="2pore_dom_K_chnl_THIK"/>
</dbReference>
<dbReference type="InterPro" id="IPR013099">
    <property type="entry name" value="K_chnl_dom"/>
</dbReference>
<dbReference type="PANTHER" id="PTHR11003:SF57">
    <property type="entry name" value="POTASSIUM CHANNEL SUBFAMILY K MEMBER 13"/>
    <property type="match status" value="1"/>
</dbReference>
<dbReference type="PANTHER" id="PTHR11003">
    <property type="entry name" value="POTASSIUM CHANNEL, SUBFAMILY K"/>
    <property type="match status" value="1"/>
</dbReference>
<dbReference type="Pfam" id="PF07885">
    <property type="entry name" value="Ion_trans_2"/>
    <property type="match status" value="2"/>
</dbReference>
<dbReference type="PRINTS" id="PR01333">
    <property type="entry name" value="2POREKCHANEL"/>
</dbReference>
<dbReference type="PRINTS" id="PR01588">
    <property type="entry name" value="THIKCHANNEL"/>
</dbReference>
<dbReference type="SUPFAM" id="SSF81324">
    <property type="entry name" value="Voltage-gated potassium channels"/>
    <property type="match status" value="2"/>
</dbReference>
<feature type="chain" id="PRO_0000101763" description="Potassium channel subfamily K member 13">
    <location>
        <begin position="1"/>
        <end position="405"/>
    </location>
</feature>
<feature type="topological domain" description="Cytoplasmic" evidence="3">
    <location>
        <begin position="1"/>
        <end position="19"/>
    </location>
</feature>
<feature type="transmembrane region" description="Helical" evidence="3">
    <location>
        <begin position="20"/>
        <end position="40"/>
    </location>
</feature>
<feature type="intramembrane region" description="Pore-forming; Name=Pore-forming 1" evidence="3">
    <location>
        <begin position="95"/>
        <end position="115"/>
    </location>
</feature>
<feature type="transmembrane region" description="Helical" evidence="3">
    <location>
        <begin position="125"/>
        <end position="145"/>
    </location>
</feature>
<feature type="topological domain" description="Cytoplasmic" evidence="3">
    <location>
        <begin position="146"/>
        <end position="193"/>
    </location>
</feature>
<feature type="transmembrane region" description="Helical" evidence="3">
    <location>
        <begin position="194"/>
        <end position="214"/>
    </location>
</feature>
<feature type="intramembrane region" description="Pore-forming; Name=Pore-forming 2" evidence="3">
    <location>
        <begin position="224"/>
        <end position="244"/>
    </location>
</feature>
<feature type="transmembrane region" description="Helical" evidence="3">
    <location>
        <begin position="263"/>
        <end position="283"/>
    </location>
</feature>
<feature type="topological domain" description="Cytoplasmic" evidence="3">
    <location>
        <begin position="284"/>
        <end position="405"/>
    </location>
</feature>
<feature type="region of interest" description="Selectivity filter 1" evidence="1">
    <location>
        <begin position="110"/>
        <end position="115"/>
    </location>
</feature>
<feature type="region of interest" description="Selectivity filter 2" evidence="1">
    <location>
        <begin position="237"/>
        <end position="242"/>
    </location>
</feature>
<feature type="binding site" evidence="1">
    <location>
        <position position="110"/>
    </location>
    <ligand>
        <name>K(+)</name>
        <dbReference type="ChEBI" id="CHEBI:29103"/>
        <label>1</label>
    </ligand>
</feature>
<feature type="binding site" evidence="1">
    <location>
        <position position="110"/>
    </location>
    <ligand>
        <name>K(+)</name>
        <dbReference type="ChEBI" id="CHEBI:29103"/>
        <label>4</label>
    </ligand>
</feature>
<feature type="binding site" evidence="1">
    <location>
        <position position="111"/>
    </location>
    <ligand>
        <name>K(+)</name>
        <dbReference type="ChEBI" id="CHEBI:29103"/>
        <label>1</label>
    </ligand>
</feature>
<feature type="binding site" evidence="1">
    <location>
        <position position="111"/>
    </location>
    <ligand>
        <name>K(+)</name>
        <dbReference type="ChEBI" id="CHEBI:29103"/>
        <label>2</label>
    </ligand>
</feature>
<feature type="binding site" evidence="1">
    <location>
        <position position="112"/>
    </location>
    <ligand>
        <name>K(+)</name>
        <dbReference type="ChEBI" id="CHEBI:29103"/>
        <label>2</label>
    </ligand>
</feature>
<feature type="binding site" evidence="1">
    <location>
        <position position="112"/>
    </location>
    <ligand>
        <name>K(+)</name>
        <dbReference type="ChEBI" id="CHEBI:29103"/>
        <label>3</label>
    </ligand>
</feature>
<feature type="binding site" evidence="1">
    <location>
        <position position="237"/>
    </location>
    <ligand>
        <name>K(+)</name>
        <dbReference type="ChEBI" id="CHEBI:29103"/>
        <label>1</label>
    </ligand>
</feature>
<feature type="binding site" evidence="1">
    <location>
        <position position="237"/>
    </location>
    <ligand>
        <name>K(+)</name>
        <dbReference type="ChEBI" id="CHEBI:29103"/>
        <label>4</label>
    </ligand>
</feature>
<feature type="binding site" evidence="1">
    <location>
        <position position="238"/>
    </location>
    <ligand>
        <name>K(+)</name>
        <dbReference type="ChEBI" id="CHEBI:29103"/>
        <label>1</label>
    </ligand>
</feature>
<feature type="binding site" evidence="1">
    <location>
        <position position="238"/>
    </location>
    <ligand>
        <name>K(+)</name>
        <dbReference type="ChEBI" id="CHEBI:29103"/>
        <label>2</label>
    </ligand>
</feature>
<feature type="binding site" evidence="1">
    <location>
        <position position="239"/>
    </location>
    <ligand>
        <name>K(+)</name>
        <dbReference type="ChEBI" id="CHEBI:29103"/>
        <label>2</label>
    </ligand>
</feature>
<feature type="binding site" evidence="1">
    <location>
        <position position="239"/>
    </location>
    <ligand>
        <name>K(+)</name>
        <dbReference type="ChEBI" id="CHEBI:29103"/>
        <label>3</label>
    </ligand>
</feature>
<feature type="binding site" evidence="1">
    <location>
        <position position="240"/>
    </location>
    <ligand>
        <name>K(+)</name>
        <dbReference type="ChEBI" id="CHEBI:29103"/>
        <label>3</label>
    </ligand>
</feature>
<feature type="glycosylation site" description="N-linked (GlcNAc...) asparagine" evidence="3">
    <location>
        <position position="59"/>
    </location>
</feature>
<feature type="glycosylation site" description="N-linked (GlcNAc...) asparagine" evidence="3">
    <location>
        <position position="65"/>
    </location>
</feature>
<reference key="1">
    <citation type="journal article" date="2004" name="Genome Res.">
        <title>The status, quality, and expansion of the NIH full-length cDNA project: the Mammalian Gene Collection (MGC).</title>
        <authorList>
            <consortium name="The MGC Project Team"/>
        </authorList>
    </citation>
    <scope>NUCLEOTIDE SEQUENCE [LARGE SCALE MRNA]</scope>
    <source>
        <tissue>Mammary tumor</tissue>
    </source>
</reference>
<reference key="2">
    <citation type="journal article" date="2018" name="Neuron">
        <title>Microglial Ramification, Surveillance, and Interleukin-1beta Release Are Regulated by the Two-Pore Domain K+ Channel THIK-1.</title>
        <authorList>
            <person name="Madry C."/>
            <person name="Kyrargyri V."/>
            <person name="Arancibia-Carcamo I.L."/>
            <person name="Jolivet R."/>
            <person name="Kohsaka S."/>
            <person name="Bryan R.M."/>
            <person name="Attwell D."/>
        </authorList>
    </citation>
    <scope>FUNCTION</scope>
</reference>
<reference key="3">
    <citation type="journal article" date="2021" name="Proc. Natl. Acad. Sci. U.S.A.">
        <title>Synapse development is regulated by microglial THIK-1 K+ channels.</title>
        <authorList>
            <person name="Izquierdo P."/>
            <person name="Shiina H."/>
            <person name="Hirunpattarasilp C."/>
            <person name="Gillis G."/>
            <person name="Attwell D."/>
        </authorList>
    </citation>
    <scope>FUNCTION</scope>
</reference>
<reference key="4">
    <citation type="journal article" date="2022" name="Glia">
        <title>The two pore potassium channel THIK-1 regulates NLRP3 inflammasome activation.</title>
        <authorList>
            <person name="Drinkall S."/>
            <person name="Lawrence C.B."/>
            <person name="Ossola B."/>
            <person name="Russell S."/>
            <person name="Bender C."/>
            <person name="Brice N.B."/>
            <person name="Dawson L.A."/>
            <person name="Harte M."/>
            <person name="Brough D."/>
        </authorList>
    </citation>
    <scope>FUNCTION</scope>
</reference>
<reference key="5">
    <citation type="journal article" date="2024" name="J. Neuroinflamm.">
        <title>Differential contribution of THIK-1 K+ channels and P2X7 receptors to ATP-mediated neuroinflammation by human microglia.</title>
        <authorList>
            <person name="Rifat A."/>
            <person name="Ossola B."/>
            <person name="Buerli R.W."/>
            <person name="Dawson L.A."/>
            <person name="Brice N.L."/>
            <person name="Rowland A."/>
            <person name="Lizio M."/>
            <person name="Xu X."/>
            <person name="Page K."/>
            <person name="Fidzinski P."/>
            <person name="Onken J."/>
            <person name="Holtkamp M."/>
            <person name="Heppner F.L."/>
            <person name="Geiger J.R.P."/>
            <person name="Madry C."/>
        </authorList>
    </citation>
    <scope>FUNCTION</scope>
</reference>